<name>RIMP_CAMLR</name>
<reference key="1">
    <citation type="journal article" date="2008" name="Foodborne Pathog. Dis.">
        <title>The complete genome sequence and analysis of the human pathogen Campylobacter lari.</title>
        <authorList>
            <person name="Miller W.G."/>
            <person name="Wang G."/>
            <person name="Binnewies T.T."/>
            <person name="Parker C.T."/>
        </authorList>
    </citation>
    <scope>NUCLEOTIDE SEQUENCE [LARGE SCALE GENOMIC DNA]</scope>
    <source>
        <strain>RM2100 / D67 / ATCC BAA-1060</strain>
    </source>
</reference>
<feature type="chain" id="PRO_1000149785" description="Ribosome maturation factor RimP">
    <location>
        <begin position="1"/>
        <end position="140"/>
    </location>
</feature>
<accession>B9KEV2</accession>
<protein>
    <recommendedName>
        <fullName evidence="1">Ribosome maturation factor RimP</fullName>
    </recommendedName>
</protein>
<gene>
    <name evidence="1" type="primary">rimP</name>
    <name type="ordered locus">Cla_0224</name>
</gene>
<dbReference type="EMBL" id="CP000932">
    <property type="protein sequence ID" value="ACM63587.1"/>
    <property type="molecule type" value="Genomic_DNA"/>
</dbReference>
<dbReference type="RefSeq" id="WP_012660971.1">
    <property type="nucleotide sequence ID" value="NC_012039.1"/>
</dbReference>
<dbReference type="SMR" id="B9KEV2"/>
<dbReference type="STRING" id="306263.Cla_0224"/>
<dbReference type="KEGG" id="cla:CLA_0224"/>
<dbReference type="PATRIC" id="fig|306263.5.peg.223"/>
<dbReference type="eggNOG" id="COG0779">
    <property type="taxonomic scope" value="Bacteria"/>
</dbReference>
<dbReference type="HOGENOM" id="CLU_070525_2_2_7"/>
<dbReference type="Proteomes" id="UP000007727">
    <property type="component" value="Chromosome"/>
</dbReference>
<dbReference type="GO" id="GO:0005829">
    <property type="term" value="C:cytosol"/>
    <property type="evidence" value="ECO:0007669"/>
    <property type="project" value="TreeGrafter"/>
</dbReference>
<dbReference type="GO" id="GO:0000028">
    <property type="term" value="P:ribosomal small subunit assembly"/>
    <property type="evidence" value="ECO:0007669"/>
    <property type="project" value="TreeGrafter"/>
</dbReference>
<dbReference type="GO" id="GO:0006412">
    <property type="term" value="P:translation"/>
    <property type="evidence" value="ECO:0007669"/>
    <property type="project" value="TreeGrafter"/>
</dbReference>
<dbReference type="CDD" id="cd01734">
    <property type="entry name" value="YlxS_C"/>
    <property type="match status" value="1"/>
</dbReference>
<dbReference type="Gene3D" id="2.30.30.180">
    <property type="entry name" value="Ribosome maturation factor RimP, C-terminal domain"/>
    <property type="match status" value="1"/>
</dbReference>
<dbReference type="Gene3D" id="3.30.300.70">
    <property type="entry name" value="RimP-like superfamily, N-terminal"/>
    <property type="match status" value="1"/>
</dbReference>
<dbReference type="HAMAP" id="MF_01077">
    <property type="entry name" value="RimP"/>
    <property type="match status" value="1"/>
</dbReference>
<dbReference type="InterPro" id="IPR003728">
    <property type="entry name" value="Ribosome_maturation_RimP"/>
</dbReference>
<dbReference type="InterPro" id="IPR028998">
    <property type="entry name" value="RimP_C"/>
</dbReference>
<dbReference type="InterPro" id="IPR036847">
    <property type="entry name" value="RimP_C_sf"/>
</dbReference>
<dbReference type="InterPro" id="IPR028989">
    <property type="entry name" value="RimP_N"/>
</dbReference>
<dbReference type="InterPro" id="IPR035956">
    <property type="entry name" value="RimP_N_sf"/>
</dbReference>
<dbReference type="NCBIfam" id="NF011232">
    <property type="entry name" value="PRK14639.1"/>
    <property type="match status" value="1"/>
</dbReference>
<dbReference type="PANTHER" id="PTHR33867">
    <property type="entry name" value="RIBOSOME MATURATION FACTOR RIMP"/>
    <property type="match status" value="1"/>
</dbReference>
<dbReference type="PANTHER" id="PTHR33867:SF1">
    <property type="entry name" value="RIBOSOME MATURATION FACTOR RIMP"/>
    <property type="match status" value="1"/>
</dbReference>
<dbReference type="Pfam" id="PF17384">
    <property type="entry name" value="DUF150_C"/>
    <property type="match status" value="1"/>
</dbReference>
<dbReference type="Pfam" id="PF02576">
    <property type="entry name" value="RimP_N"/>
    <property type="match status" value="1"/>
</dbReference>
<dbReference type="SUPFAM" id="SSF74942">
    <property type="entry name" value="YhbC-like, C-terminal domain"/>
    <property type="match status" value="1"/>
</dbReference>
<dbReference type="SUPFAM" id="SSF75420">
    <property type="entry name" value="YhbC-like, N-terminal domain"/>
    <property type="match status" value="1"/>
</dbReference>
<sequence length="140" mass="15969">MNLEALCKEAGLSFYDDELVSENGKKIYRVYVQKEGGVKLDDCARLSEILSPIFDVEPPVSGEYFLEVSSCGLERKLSKIEHFAKSINELVKITTSEKEKIEAKIVSVDDENITLENLKTQEKTTLKFSDIRKARTFVEW</sequence>
<keyword id="KW-0963">Cytoplasm</keyword>
<keyword id="KW-1185">Reference proteome</keyword>
<keyword id="KW-0690">Ribosome biogenesis</keyword>
<organism>
    <name type="scientific">Campylobacter lari (strain RM2100 / D67 / ATCC BAA-1060)</name>
    <dbReference type="NCBI Taxonomy" id="306263"/>
    <lineage>
        <taxon>Bacteria</taxon>
        <taxon>Pseudomonadati</taxon>
        <taxon>Campylobacterota</taxon>
        <taxon>Epsilonproteobacteria</taxon>
        <taxon>Campylobacterales</taxon>
        <taxon>Campylobacteraceae</taxon>
        <taxon>Campylobacter</taxon>
    </lineage>
</organism>
<evidence type="ECO:0000255" key="1">
    <source>
        <dbReference type="HAMAP-Rule" id="MF_01077"/>
    </source>
</evidence>
<proteinExistence type="inferred from homology"/>
<comment type="function">
    <text evidence="1">Required for maturation of 30S ribosomal subunits.</text>
</comment>
<comment type="subcellular location">
    <subcellularLocation>
        <location evidence="1">Cytoplasm</location>
    </subcellularLocation>
</comment>
<comment type="similarity">
    <text evidence="1">Belongs to the RimP family.</text>
</comment>